<sequence>MLSKRIIPCLDVRDGRTTKGIKFRNNVDIGDPVDMGRFYYEEGADEIVFYDITASSDRRGIMLDVVKRVAETIFIPFSVGGGIRTLEDMRDVLLAGAEKVSVNSAAVLNPDIISQGAEAFGSQCIVLGMDVKHVAPSTRIPSGYEIVINGGRTTTGFDALWWALEAERLGAGEICLNSIDADGTRDGYELRLTRLISTSVRIPVIASGGAGTPNHLADVLKQGRADAALIASMVHYGTYSIRRIKQFLDDNGIRVRKTW</sequence>
<protein>
    <recommendedName>
        <fullName evidence="1">Imidazole glycerol phosphate synthase subunit HisF</fullName>
        <ecNumber evidence="1">4.3.2.10</ecNumber>
    </recommendedName>
    <alternativeName>
        <fullName evidence="1">IGP synthase cyclase subunit</fullName>
    </alternativeName>
    <alternativeName>
        <fullName evidence="1">IGP synthase subunit HisF</fullName>
    </alternativeName>
    <alternativeName>
        <fullName evidence="1">ImGP synthase subunit HisF</fullName>
        <shortName evidence="1">IGPS subunit HisF</shortName>
    </alternativeName>
</protein>
<reference key="1">
    <citation type="submission" date="2006-10" db="EMBL/GenBank/DDBJ databases">
        <title>Complete sequence of Syntrophobacter fumaroxidans MPOB.</title>
        <authorList>
            <consortium name="US DOE Joint Genome Institute"/>
            <person name="Copeland A."/>
            <person name="Lucas S."/>
            <person name="Lapidus A."/>
            <person name="Barry K."/>
            <person name="Detter J.C."/>
            <person name="Glavina del Rio T."/>
            <person name="Hammon N."/>
            <person name="Israni S."/>
            <person name="Pitluck S."/>
            <person name="Goltsman E.G."/>
            <person name="Martinez M."/>
            <person name="Schmutz J."/>
            <person name="Larimer F."/>
            <person name="Land M."/>
            <person name="Hauser L."/>
            <person name="Kyrpides N."/>
            <person name="Kim E."/>
            <person name="Boone D.R."/>
            <person name="Brockman F."/>
            <person name="Culley D."/>
            <person name="Ferry J."/>
            <person name="Gunsalus R."/>
            <person name="McInerney M.J."/>
            <person name="Morrison M."/>
            <person name="Plugge C."/>
            <person name="Rohlin L."/>
            <person name="Scholten J."/>
            <person name="Sieber J."/>
            <person name="Stams A.J.M."/>
            <person name="Worm P."/>
            <person name="Henstra A.M."/>
            <person name="Richardson P."/>
        </authorList>
    </citation>
    <scope>NUCLEOTIDE SEQUENCE [LARGE SCALE GENOMIC DNA]</scope>
    <source>
        <strain>DSM 10017 / MPOB</strain>
    </source>
</reference>
<organism>
    <name type="scientific">Syntrophobacter fumaroxidans (strain DSM 10017 / MPOB)</name>
    <dbReference type="NCBI Taxonomy" id="335543"/>
    <lineage>
        <taxon>Bacteria</taxon>
        <taxon>Pseudomonadati</taxon>
        <taxon>Thermodesulfobacteriota</taxon>
        <taxon>Syntrophobacteria</taxon>
        <taxon>Syntrophobacterales</taxon>
        <taxon>Syntrophobacteraceae</taxon>
        <taxon>Syntrophobacter</taxon>
    </lineage>
</organism>
<comment type="function">
    <text evidence="1">IGPS catalyzes the conversion of PRFAR and glutamine to IGP, AICAR and glutamate. The HisF subunit catalyzes the cyclization activity that produces IGP and AICAR from PRFAR using the ammonia provided by the HisH subunit.</text>
</comment>
<comment type="catalytic activity">
    <reaction evidence="1">
        <text>5-[(5-phospho-1-deoxy-D-ribulos-1-ylimino)methylamino]-1-(5-phospho-beta-D-ribosyl)imidazole-4-carboxamide + L-glutamine = D-erythro-1-(imidazol-4-yl)glycerol 3-phosphate + 5-amino-1-(5-phospho-beta-D-ribosyl)imidazole-4-carboxamide + L-glutamate + H(+)</text>
        <dbReference type="Rhea" id="RHEA:24793"/>
        <dbReference type="ChEBI" id="CHEBI:15378"/>
        <dbReference type="ChEBI" id="CHEBI:29985"/>
        <dbReference type="ChEBI" id="CHEBI:58278"/>
        <dbReference type="ChEBI" id="CHEBI:58359"/>
        <dbReference type="ChEBI" id="CHEBI:58475"/>
        <dbReference type="ChEBI" id="CHEBI:58525"/>
        <dbReference type="EC" id="4.3.2.10"/>
    </reaction>
</comment>
<comment type="pathway">
    <text evidence="1">Amino-acid biosynthesis; L-histidine biosynthesis; L-histidine from 5-phospho-alpha-D-ribose 1-diphosphate: step 5/9.</text>
</comment>
<comment type="subunit">
    <text evidence="1">Heterodimer of HisH and HisF.</text>
</comment>
<comment type="subcellular location">
    <subcellularLocation>
        <location evidence="1">Cytoplasm</location>
    </subcellularLocation>
</comment>
<comment type="similarity">
    <text evidence="1">Belongs to the HisA/HisF family.</text>
</comment>
<dbReference type="EC" id="4.3.2.10" evidence="1"/>
<dbReference type="EMBL" id="CP000478">
    <property type="protein sequence ID" value="ABK16183.1"/>
    <property type="molecule type" value="Genomic_DNA"/>
</dbReference>
<dbReference type="RefSeq" id="WP_011697356.1">
    <property type="nucleotide sequence ID" value="NC_008554.1"/>
</dbReference>
<dbReference type="SMR" id="A0LFI1"/>
<dbReference type="FunCoup" id="A0LFI1">
    <property type="interactions" value="544"/>
</dbReference>
<dbReference type="STRING" id="335543.Sfum_0483"/>
<dbReference type="KEGG" id="sfu:Sfum_0483"/>
<dbReference type="eggNOG" id="COG0107">
    <property type="taxonomic scope" value="Bacteria"/>
</dbReference>
<dbReference type="HOGENOM" id="CLU_048577_4_0_7"/>
<dbReference type="InParanoid" id="A0LFI1"/>
<dbReference type="OrthoDB" id="9807749at2"/>
<dbReference type="UniPathway" id="UPA00031">
    <property type="reaction ID" value="UER00010"/>
</dbReference>
<dbReference type="Proteomes" id="UP000001784">
    <property type="component" value="Chromosome"/>
</dbReference>
<dbReference type="GO" id="GO:0005737">
    <property type="term" value="C:cytoplasm"/>
    <property type="evidence" value="ECO:0007669"/>
    <property type="project" value="UniProtKB-SubCell"/>
</dbReference>
<dbReference type="GO" id="GO:0000107">
    <property type="term" value="F:imidazoleglycerol-phosphate synthase activity"/>
    <property type="evidence" value="ECO:0007669"/>
    <property type="project" value="UniProtKB-UniRule"/>
</dbReference>
<dbReference type="GO" id="GO:0016829">
    <property type="term" value="F:lyase activity"/>
    <property type="evidence" value="ECO:0007669"/>
    <property type="project" value="UniProtKB-KW"/>
</dbReference>
<dbReference type="GO" id="GO:0000105">
    <property type="term" value="P:L-histidine biosynthetic process"/>
    <property type="evidence" value="ECO:0007669"/>
    <property type="project" value="UniProtKB-UniRule"/>
</dbReference>
<dbReference type="CDD" id="cd04731">
    <property type="entry name" value="HisF"/>
    <property type="match status" value="1"/>
</dbReference>
<dbReference type="FunFam" id="3.20.20.70:FF:000006">
    <property type="entry name" value="Imidazole glycerol phosphate synthase subunit HisF"/>
    <property type="match status" value="1"/>
</dbReference>
<dbReference type="Gene3D" id="3.20.20.70">
    <property type="entry name" value="Aldolase class I"/>
    <property type="match status" value="1"/>
</dbReference>
<dbReference type="HAMAP" id="MF_01013">
    <property type="entry name" value="HisF"/>
    <property type="match status" value="1"/>
</dbReference>
<dbReference type="InterPro" id="IPR013785">
    <property type="entry name" value="Aldolase_TIM"/>
</dbReference>
<dbReference type="InterPro" id="IPR006062">
    <property type="entry name" value="His_biosynth"/>
</dbReference>
<dbReference type="InterPro" id="IPR004651">
    <property type="entry name" value="HisF"/>
</dbReference>
<dbReference type="InterPro" id="IPR050064">
    <property type="entry name" value="IGPS_HisA/HisF"/>
</dbReference>
<dbReference type="InterPro" id="IPR011060">
    <property type="entry name" value="RibuloseP-bd_barrel"/>
</dbReference>
<dbReference type="NCBIfam" id="TIGR00735">
    <property type="entry name" value="hisF"/>
    <property type="match status" value="1"/>
</dbReference>
<dbReference type="PANTHER" id="PTHR21235:SF2">
    <property type="entry name" value="IMIDAZOLE GLYCEROL PHOSPHATE SYNTHASE HISHF"/>
    <property type="match status" value="1"/>
</dbReference>
<dbReference type="PANTHER" id="PTHR21235">
    <property type="entry name" value="IMIDAZOLE GLYCEROL PHOSPHATE SYNTHASE SUBUNIT HISF/H IGP SYNTHASE SUBUNIT HISF/H"/>
    <property type="match status" value="1"/>
</dbReference>
<dbReference type="Pfam" id="PF00977">
    <property type="entry name" value="His_biosynth"/>
    <property type="match status" value="1"/>
</dbReference>
<dbReference type="SUPFAM" id="SSF51366">
    <property type="entry name" value="Ribulose-phoshate binding barrel"/>
    <property type="match status" value="1"/>
</dbReference>
<gene>
    <name evidence="1" type="primary">hisF</name>
    <name type="ordered locus">Sfum_0483</name>
</gene>
<feature type="chain" id="PRO_1000063163" description="Imidazole glycerol phosphate synthase subunit HisF">
    <location>
        <begin position="1"/>
        <end position="259"/>
    </location>
</feature>
<feature type="active site" evidence="1">
    <location>
        <position position="11"/>
    </location>
</feature>
<feature type="active site" evidence="1">
    <location>
        <position position="130"/>
    </location>
</feature>
<proteinExistence type="inferred from homology"/>
<evidence type="ECO:0000255" key="1">
    <source>
        <dbReference type="HAMAP-Rule" id="MF_01013"/>
    </source>
</evidence>
<name>HIS6_SYNFM</name>
<accession>A0LFI1</accession>
<keyword id="KW-0028">Amino-acid biosynthesis</keyword>
<keyword id="KW-0963">Cytoplasm</keyword>
<keyword id="KW-0368">Histidine biosynthesis</keyword>
<keyword id="KW-0456">Lyase</keyword>
<keyword id="KW-1185">Reference proteome</keyword>